<comment type="function">
    <text evidence="1">Binds directly to 23S rRNA. The L1 stalk is quite mobile in the ribosome, and is involved in E site tRNA release.</text>
</comment>
<comment type="function">
    <text evidence="1">Protein L1 is also a translational repressor protein, it controls the translation of the L11 operon by binding to its mRNA.</text>
</comment>
<comment type="subunit">
    <text evidence="1">Part of the 50S ribosomal subunit.</text>
</comment>
<comment type="similarity">
    <text evidence="1">Belongs to the universal ribosomal protein uL1 family.</text>
</comment>
<proteinExistence type="inferred from homology"/>
<reference key="1">
    <citation type="submission" date="2007-09" db="EMBL/GenBank/DDBJ databases">
        <title>Complete genome sequence of Rickettsia akari.</title>
        <authorList>
            <person name="Madan A."/>
            <person name="Fahey J."/>
            <person name="Helton E."/>
            <person name="Ketteman M."/>
            <person name="Madan A."/>
            <person name="Rodrigues S."/>
            <person name="Sanchez A."/>
            <person name="Whiting M."/>
            <person name="Dasch G."/>
            <person name="Eremeeva M."/>
        </authorList>
    </citation>
    <scope>NUCLEOTIDE SEQUENCE [LARGE SCALE GENOMIC DNA]</scope>
    <source>
        <strain>Hartford</strain>
    </source>
</reference>
<sequence length="239" mass="25634">MSNKKDITVKMSGGKKIREAREKVKPDTLYNLTNAVEQLKSASYVKFDPTLEIVMKLGIDPRHSDQMVRGVVNLPAGTGKIVRVAVICKEEREEEAKSAGADLVGSTNIIDEIKSGKINFDVCIATPDMMAAIGSVARILGPKGLMPNPKLGTVTLDIKNAIKNAKSGQVEYRAEKSGIIHAGLGKLSFSDQDLLKNLNAFIEAVIKAKPSGLKGSYLKAMYLSSTMGASVQIDLTSIA</sequence>
<gene>
    <name evidence="1" type="primary">rplA</name>
    <name type="ordered locus">A1C_00995</name>
</gene>
<organism>
    <name type="scientific">Rickettsia akari (strain Hartford)</name>
    <dbReference type="NCBI Taxonomy" id="293614"/>
    <lineage>
        <taxon>Bacteria</taxon>
        <taxon>Pseudomonadati</taxon>
        <taxon>Pseudomonadota</taxon>
        <taxon>Alphaproteobacteria</taxon>
        <taxon>Rickettsiales</taxon>
        <taxon>Rickettsiaceae</taxon>
        <taxon>Rickettsieae</taxon>
        <taxon>Rickettsia</taxon>
        <taxon>spotted fever group</taxon>
    </lineage>
</organism>
<protein>
    <recommendedName>
        <fullName evidence="1">Large ribosomal subunit protein uL1</fullName>
    </recommendedName>
    <alternativeName>
        <fullName evidence="2">50S ribosomal protein L1</fullName>
    </alternativeName>
</protein>
<evidence type="ECO:0000255" key="1">
    <source>
        <dbReference type="HAMAP-Rule" id="MF_01318"/>
    </source>
</evidence>
<evidence type="ECO:0000305" key="2"/>
<feature type="chain" id="PRO_1000051917" description="Large ribosomal subunit protein uL1">
    <location>
        <begin position="1"/>
        <end position="239"/>
    </location>
</feature>
<name>RL1_RICAH</name>
<keyword id="KW-0678">Repressor</keyword>
<keyword id="KW-0687">Ribonucleoprotein</keyword>
<keyword id="KW-0689">Ribosomal protein</keyword>
<keyword id="KW-0694">RNA-binding</keyword>
<keyword id="KW-0699">rRNA-binding</keyword>
<keyword id="KW-0810">Translation regulation</keyword>
<keyword id="KW-0820">tRNA-binding</keyword>
<accession>A8GMA4</accession>
<dbReference type="EMBL" id="CP000847">
    <property type="protein sequence ID" value="ABV74529.1"/>
    <property type="molecule type" value="Genomic_DNA"/>
</dbReference>
<dbReference type="RefSeq" id="WP_012013399.1">
    <property type="nucleotide sequence ID" value="NC_009881.1"/>
</dbReference>
<dbReference type="SMR" id="A8GMA4"/>
<dbReference type="STRING" id="293614.A1C_00995"/>
<dbReference type="KEGG" id="rak:A1C_00995"/>
<dbReference type="eggNOG" id="COG0081">
    <property type="taxonomic scope" value="Bacteria"/>
</dbReference>
<dbReference type="HOGENOM" id="CLU_062853_0_0_5"/>
<dbReference type="Proteomes" id="UP000006830">
    <property type="component" value="Chromosome"/>
</dbReference>
<dbReference type="GO" id="GO:0015934">
    <property type="term" value="C:large ribosomal subunit"/>
    <property type="evidence" value="ECO:0007669"/>
    <property type="project" value="InterPro"/>
</dbReference>
<dbReference type="GO" id="GO:0019843">
    <property type="term" value="F:rRNA binding"/>
    <property type="evidence" value="ECO:0007669"/>
    <property type="project" value="UniProtKB-UniRule"/>
</dbReference>
<dbReference type="GO" id="GO:0003735">
    <property type="term" value="F:structural constituent of ribosome"/>
    <property type="evidence" value="ECO:0007669"/>
    <property type="project" value="InterPro"/>
</dbReference>
<dbReference type="GO" id="GO:0000049">
    <property type="term" value="F:tRNA binding"/>
    <property type="evidence" value="ECO:0007669"/>
    <property type="project" value="UniProtKB-KW"/>
</dbReference>
<dbReference type="GO" id="GO:0006417">
    <property type="term" value="P:regulation of translation"/>
    <property type="evidence" value="ECO:0007669"/>
    <property type="project" value="UniProtKB-KW"/>
</dbReference>
<dbReference type="GO" id="GO:0006412">
    <property type="term" value="P:translation"/>
    <property type="evidence" value="ECO:0007669"/>
    <property type="project" value="UniProtKB-UniRule"/>
</dbReference>
<dbReference type="CDD" id="cd00403">
    <property type="entry name" value="Ribosomal_L1"/>
    <property type="match status" value="1"/>
</dbReference>
<dbReference type="FunFam" id="3.40.50.790:FF:000001">
    <property type="entry name" value="50S ribosomal protein L1"/>
    <property type="match status" value="1"/>
</dbReference>
<dbReference type="Gene3D" id="3.30.190.20">
    <property type="match status" value="1"/>
</dbReference>
<dbReference type="Gene3D" id="3.40.50.790">
    <property type="match status" value="1"/>
</dbReference>
<dbReference type="HAMAP" id="MF_01318_B">
    <property type="entry name" value="Ribosomal_uL1_B"/>
    <property type="match status" value="1"/>
</dbReference>
<dbReference type="InterPro" id="IPR005878">
    <property type="entry name" value="Ribosom_uL1_bac-type"/>
</dbReference>
<dbReference type="InterPro" id="IPR002143">
    <property type="entry name" value="Ribosomal_uL1"/>
</dbReference>
<dbReference type="InterPro" id="IPR023674">
    <property type="entry name" value="Ribosomal_uL1-like"/>
</dbReference>
<dbReference type="InterPro" id="IPR028364">
    <property type="entry name" value="Ribosomal_uL1/biogenesis"/>
</dbReference>
<dbReference type="InterPro" id="IPR016095">
    <property type="entry name" value="Ribosomal_uL1_3-a/b-sand"/>
</dbReference>
<dbReference type="InterPro" id="IPR023673">
    <property type="entry name" value="Ribosomal_uL1_CS"/>
</dbReference>
<dbReference type="NCBIfam" id="TIGR01169">
    <property type="entry name" value="rplA_bact"/>
    <property type="match status" value="1"/>
</dbReference>
<dbReference type="PANTHER" id="PTHR36427">
    <property type="entry name" value="54S RIBOSOMAL PROTEIN L1, MITOCHONDRIAL"/>
    <property type="match status" value="1"/>
</dbReference>
<dbReference type="PANTHER" id="PTHR36427:SF3">
    <property type="entry name" value="LARGE RIBOSOMAL SUBUNIT PROTEIN UL1M"/>
    <property type="match status" value="1"/>
</dbReference>
<dbReference type="Pfam" id="PF00687">
    <property type="entry name" value="Ribosomal_L1"/>
    <property type="match status" value="1"/>
</dbReference>
<dbReference type="PIRSF" id="PIRSF002155">
    <property type="entry name" value="Ribosomal_L1"/>
    <property type="match status" value="1"/>
</dbReference>
<dbReference type="SUPFAM" id="SSF56808">
    <property type="entry name" value="Ribosomal protein L1"/>
    <property type="match status" value="1"/>
</dbReference>
<dbReference type="PROSITE" id="PS01199">
    <property type="entry name" value="RIBOSOMAL_L1"/>
    <property type="match status" value="1"/>
</dbReference>